<evidence type="ECO:0000250" key="1"/>
<evidence type="ECO:0000250" key="2">
    <source>
        <dbReference type="UniProtKB" id="Q04636"/>
    </source>
</evidence>
<evidence type="ECO:0000256" key="3">
    <source>
        <dbReference type="SAM" id="MobiDB-lite"/>
    </source>
</evidence>
<evidence type="ECO:0000305" key="4"/>
<comment type="function">
    <text evidence="1">Component of the FACT complex, a general chromatin factor that acts to reorganize nucleosomes. The FACT complex is involved in multiple processes that require DNA as a template such as mRNA elongation, DNA replication and DNA repair. During transcription elongation the FACT complex acts as a histone chaperone that both destabilizes and restores nucleosomal structure. It facilitates the passage of RNA polymerase II and transcription by promoting the dissociation of one histone H2A-H2B dimer from the nucleosome, then subsequently promotes the reestablishment of the nucleosome following the passage of RNA polymerase II (By similarity).</text>
</comment>
<comment type="subunit">
    <text evidence="1">Forms a stable heterodimer with SPT16. The SPT16-POB3 dimer weakly associates with multiple molecules of NHP6 to form the FACT complex (By similarity).</text>
</comment>
<comment type="subcellular location">
    <subcellularLocation>
        <location evidence="2">Nucleus</location>
    </subcellularLocation>
    <subcellularLocation>
        <location evidence="2">Chromosome</location>
    </subcellularLocation>
    <text evidence="2">Colocalizes with RNA polymerase II on chromatin. Recruited to actively transcribed loci.</text>
</comment>
<comment type="miscellaneous">
    <text>In contrast to the orthologous protein in animals and plants, this protein does not contain a HMG box DNA-binding domain. This function may instead be provided by the HMG box of the associated NHP6 protein in the FACT complex of fungi.</text>
</comment>
<comment type="similarity">
    <text evidence="4">Belongs to the SSRP1 family.</text>
</comment>
<keyword id="KW-0158">Chromosome</keyword>
<keyword id="KW-0227">DNA damage</keyword>
<keyword id="KW-0234">DNA repair</keyword>
<keyword id="KW-0235">DNA replication</keyword>
<keyword id="KW-0539">Nucleus</keyword>
<keyword id="KW-1185">Reference proteome</keyword>
<keyword id="KW-0804">Transcription</keyword>
<keyword id="KW-0805">Transcription regulation</keyword>
<organism>
    <name type="scientific">Eremothecium gossypii (strain ATCC 10895 / CBS 109.51 / FGSC 9923 / NRRL Y-1056)</name>
    <name type="common">Yeast</name>
    <name type="synonym">Ashbya gossypii</name>
    <dbReference type="NCBI Taxonomy" id="284811"/>
    <lineage>
        <taxon>Eukaryota</taxon>
        <taxon>Fungi</taxon>
        <taxon>Dikarya</taxon>
        <taxon>Ascomycota</taxon>
        <taxon>Saccharomycotina</taxon>
        <taxon>Saccharomycetes</taxon>
        <taxon>Saccharomycetales</taxon>
        <taxon>Saccharomycetaceae</taxon>
        <taxon>Eremothecium</taxon>
    </lineage>
</organism>
<reference key="1">
    <citation type="journal article" date="2004" name="Science">
        <title>The Ashbya gossypii genome as a tool for mapping the ancient Saccharomyces cerevisiae genome.</title>
        <authorList>
            <person name="Dietrich F.S."/>
            <person name="Voegeli S."/>
            <person name="Brachat S."/>
            <person name="Lerch A."/>
            <person name="Gates K."/>
            <person name="Steiner S."/>
            <person name="Mohr C."/>
            <person name="Poehlmann R."/>
            <person name="Luedi P."/>
            <person name="Choi S."/>
            <person name="Wing R.A."/>
            <person name="Flavier A."/>
            <person name="Gaffney T.D."/>
            <person name="Philippsen P."/>
        </authorList>
    </citation>
    <scope>NUCLEOTIDE SEQUENCE [LARGE SCALE GENOMIC DNA]</scope>
    <source>
        <strain>ATCC 10895 / CBS 109.51 / FGSC 9923 / NRRL Y-1056</strain>
    </source>
</reference>
<reference key="2">
    <citation type="journal article" date="2013" name="G3 (Bethesda)">
        <title>Genomes of Ashbya fungi isolated from insects reveal four mating-type loci, numerous translocations, lack of transposons, and distinct gene duplications.</title>
        <authorList>
            <person name="Dietrich F.S."/>
            <person name="Voegeli S."/>
            <person name="Kuo S."/>
            <person name="Philippsen P."/>
        </authorList>
    </citation>
    <scope>GENOME REANNOTATION</scope>
    <source>
        <strain>ATCC 10895 / CBS 109.51 / FGSC 9923 / NRRL Y-1056</strain>
    </source>
</reference>
<name>POB3_EREGS</name>
<feature type="chain" id="PRO_0000245199" description="FACT complex subunit POB3">
    <location>
        <begin position="1"/>
        <end position="542"/>
    </location>
</feature>
<feature type="region of interest" description="Disordered" evidence="3">
    <location>
        <begin position="458"/>
        <end position="542"/>
    </location>
</feature>
<feature type="compositionally biased region" description="Acidic residues" evidence="3">
    <location>
        <begin position="477"/>
        <end position="514"/>
    </location>
</feature>
<feature type="compositionally biased region" description="Acidic residues" evidence="3">
    <location>
        <begin position="521"/>
        <end position="530"/>
    </location>
</feature>
<gene>
    <name type="primary">POB3</name>
    <name type="ordered locus">AER138C</name>
</gene>
<protein>
    <recommendedName>
        <fullName>FACT complex subunit POB3</fullName>
    </recommendedName>
    <alternativeName>
        <fullName>Facilitates chromatin transcription complex subunit POB3</fullName>
    </alternativeName>
</protein>
<sequence length="542" mass="61420">MSTDFDRIYYNQSKVSGRFRLGEGGLGWKASATGGSAAMQNNEPILLTADELASVQWSRGCRGYELKINTKNKGVVQLDGFSQEDFTLLKNDLQRRFNVQLEHKDHSLRGWNWGTTDLTRNELIFSLNGKPTFEIPYSHISNTNLTSKNEVALEFDLQKDGYNPAGDELVEMRLYVPGVVTQEDRHSSPAEDADVDMEKDNKEEKSIAEAFYEELRAKAEIGEVSGDAIISFQDVFFTTPRGRYDIDIYKNSIRLRGKTYEYKLQHRQIQRIFSLPKADDIHHLMVLSIEPPLRQGQTTYPYLVLQFQKDEETEVQLNVEDDEFERLYKDKLKKQYDAKTHVVLSHVLKGLTDTRVVVPGEYKSKHEQCAVSCSFKANEGHLYPLDNAFMFLTKPTLYIPFQDVSSVNISRAGQATTSSRTFDLEVVLRSNRGSTTFANISKEEQQILESFLKSKNVRVKNEEKETQQRLQTALGSDSEDEDVNMGSAAEDDESVDEDFQAESEDDDVAEEFDSDAGVSESETEAADGADTEDRPSKKAKLA</sequence>
<accession>Q756X6</accession>
<dbReference type="EMBL" id="AE016818">
    <property type="protein sequence ID" value="AAS52821.1"/>
    <property type="molecule type" value="Genomic_DNA"/>
</dbReference>
<dbReference type="RefSeq" id="NP_984997.1">
    <property type="nucleotide sequence ID" value="NM_210351.1"/>
</dbReference>
<dbReference type="SMR" id="Q756X6"/>
<dbReference type="FunCoup" id="Q756X6">
    <property type="interactions" value="1122"/>
</dbReference>
<dbReference type="STRING" id="284811.Q756X6"/>
<dbReference type="EnsemblFungi" id="AAS52821">
    <property type="protein sequence ID" value="AAS52821"/>
    <property type="gene ID" value="AGOS_AER138C"/>
</dbReference>
<dbReference type="GeneID" id="4621203"/>
<dbReference type="KEGG" id="ago:AGOS_AER138C"/>
<dbReference type="eggNOG" id="KOG0526">
    <property type="taxonomic scope" value="Eukaryota"/>
</dbReference>
<dbReference type="HOGENOM" id="CLU_017374_3_0_1"/>
<dbReference type="InParanoid" id="Q756X6"/>
<dbReference type="OMA" id="QVVTKIF"/>
<dbReference type="OrthoDB" id="498543at2759"/>
<dbReference type="Proteomes" id="UP000000591">
    <property type="component" value="Chromosome V"/>
</dbReference>
<dbReference type="GO" id="GO:0000781">
    <property type="term" value="C:chromosome, telomeric region"/>
    <property type="evidence" value="ECO:0007669"/>
    <property type="project" value="GOC"/>
</dbReference>
<dbReference type="GO" id="GO:0035101">
    <property type="term" value="C:FACT complex"/>
    <property type="evidence" value="ECO:0000318"/>
    <property type="project" value="GO_Central"/>
</dbReference>
<dbReference type="GO" id="GO:0003677">
    <property type="term" value="F:DNA binding"/>
    <property type="evidence" value="ECO:0007669"/>
    <property type="project" value="InterPro"/>
</dbReference>
<dbReference type="GO" id="GO:0042393">
    <property type="term" value="F:histone binding"/>
    <property type="evidence" value="ECO:0000318"/>
    <property type="project" value="GO_Central"/>
</dbReference>
<dbReference type="GO" id="GO:0031491">
    <property type="term" value="F:nucleosome binding"/>
    <property type="evidence" value="ECO:0000318"/>
    <property type="project" value="GO_Central"/>
</dbReference>
<dbReference type="GO" id="GO:0006281">
    <property type="term" value="P:DNA repair"/>
    <property type="evidence" value="ECO:0007669"/>
    <property type="project" value="UniProtKB-KW"/>
</dbReference>
<dbReference type="GO" id="GO:0006335">
    <property type="term" value="P:DNA replication-dependent chromatin assembly"/>
    <property type="evidence" value="ECO:0007669"/>
    <property type="project" value="EnsemblFungi"/>
</dbReference>
<dbReference type="GO" id="GO:0006261">
    <property type="term" value="P:DNA-templated DNA replication"/>
    <property type="evidence" value="ECO:0007669"/>
    <property type="project" value="EnsemblFungi"/>
</dbReference>
<dbReference type="GO" id="GO:0034728">
    <property type="term" value="P:nucleosome organization"/>
    <property type="evidence" value="ECO:0007669"/>
    <property type="project" value="EnsemblFungi"/>
</dbReference>
<dbReference type="GO" id="GO:0031508">
    <property type="term" value="P:pericentric heterochromatin formation"/>
    <property type="evidence" value="ECO:0007669"/>
    <property type="project" value="EnsemblFungi"/>
</dbReference>
<dbReference type="GO" id="GO:0045899">
    <property type="term" value="P:positive regulation of RNA polymerase II transcription preinitiation complex assembly"/>
    <property type="evidence" value="ECO:0007669"/>
    <property type="project" value="EnsemblFungi"/>
</dbReference>
<dbReference type="GO" id="GO:0030466">
    <property type="term" value="P:silent mating-type cassette heterochromatin formation"/>
    <property type="evidence" value="ECO:0007669"/>
    <property type="project" value="EnsemblFungi"/>
</dbReference>
<dbReference type="GO" id="GO:0031509">
    <property type="term" value="P:subtelomeric heterochromatin formation"/>
    <property type="evidence" value="ECO:0007669"/>
    <property type="project" value="EnsemblFungi"/>
</dbReference>
<dbReference type="CDD" id="cd13230">
    <property type="entry name" value="PH1_SSRP1-like"/>
    <property type="match status" value="1"/>
</dbReference>
<dbReference type="CDD" id="cd13231">
    <property type="entry name" value="PH2_SSRP1-like"/>
    <property type="match status" value="1"/>
</dbReference>
<dbReference type="CDD" id="cd13229">
    <property type="entry name" value="PH_TFIIH"/>
    <property type="match status" value="1"/>
</dbReference>
<dbReference type="FunFam" id="2.30.29.30:FF:000398">
    <property type="entry name" value="FACT complex subunit POB3"/>
    <property type="match status" value="1"/>
</dbReference>
<dbReference type="FunFam" id="2.30.29.150:FF:000001">
    <property type="entry name" value="Fact complex subunit ssrp1"/>
    <property type="match status" value="1"/>
</dbReference>
<dbReference type="FunFam" id="2.30.29.30:FF:000098">
    <property type="entry name" value="Fact complex subunit ssrp1"/>
    <property type="match status" value="1"/>
</dbReference>
<dbReference type="Gene3D" id="2.30.29.150">
    <property type="match status" value="1"/>
</dbReference>
<dbReference type="Gene3D" id="2.30.29.30">
    <property type="entry name" value="Pleckstrin-homology domain (PH domain)/Phosphotyrosine-binding domain (PTB)"/>
    <property type="match status" value="2"/>
</dbReference>
<dbReference type="Gene3D" id="2.30.29.220">
    <property type="entry name" value="Structure-specific recognition protein (SSRP1)"/>
    <property type="match status" value="1"/>
</dbReference>
<dbReference type="InterPro" id="IPR011993">
    <property type="entry name" value="PH-like_dom_sf"/>
</dbReference>
<dbReference type="InterPro" id="IPR013719">
    <property type="entry name" value="RTT106/SPT16-like_middle_dom"/>
</dbReference>
<dbReference type="InterPro" id="IPR050454">
    <property type="entry name" value="RTT106/SSRP1_HistChap/FACT"/>
</dbReference>
<dbReference type="InterPro" id="IPR048993">
    <property type="entry name" value="SSRP1-like_PH1"/>
</dbReference>
<dbReference type="InterPro" id="IPR000969">
    <property type="entry name" value="SSRP1/POB3"/>
</dbReference>
<dbReference type="InterPro" id="IPR035417">
    <property type="entry name" value="SSRP1/POB3_N"/>
</dbReference>
<dbReference type="InterPro" id="IPR024954">
    <property type="entry name" value="SSRP1_DD"/>
</dbReference>
<dbReference type="InterPro" id="IPR038167">
    <property type="entry name" value="SSRP1_sf"/>
</dbReference>
<dbReference type="PANTHER" id="PTHR45849">
    <property type="entry name" value="FACT COMPLEX SUBUNIT SSRP1"/>
    <property type="match status" value="1"/>
</dbReference>
<dbReference type="PANTHER" id="PTHR45849:SF1">
    <property type="entry name" value="FACT COMPLEX SUBUNIT SSRP1"/>
    <property type="match status" value="1"/>
</dbReference>
<dbReference type="Pfam" id="PF21103">
    <property type="entry name" value="PH1_SSRP1-like"/>
    <property type="match status" value="1"/>
</dbReference>
<dbReference type="Pfam" id="PF17292">
    <property type="entry name" value="POB3_N"/>
    <property type="match status" value="1"/>
</dbReference>
<dbReference type="Pfam" id="PF08512">
    <property type="entry name" value="Rttp106-like_middle"/>
    <property type="match status" value="1"/>
</dbReference>
<dbReference type="Pfam" id="PF03531">
    <property type="entry name" value="SSrecog"/>
    <property type="match status" value="1"/>
</dbReference>
<dbReference type="PRINTS" id="PR00887">
    <property type="entry name" value="SSRCOGNITION"/>
</dbReference>
<dbReference type="SMART" id="SM01287">
    <property type="entry name" value="Rtt106"/>
    <property type="match status" value="1"/>
</dbReference>
<dbReference type="SUPFAM" id="SSF50729">
    <property type="entry name" value="PH domain-like"/>
    <property type="match status" value="1"/>
</dbReference>
<proteinExistence type="inferred from homology"/>